<reference key="1">
    <citation type="submission" date="2006-12" db="EMBL/GenBank/DDBJ databases">
        <title>Complete sequence of Chlorobium phaeobacteroides DSM 266.</title>
        <authorList>
            <consortium name="US DOE Joint Genome Institute"/>
            <person name="Copeland A."/>
            <person name="Lucas S."/>
            <person name="Lapidus A."/>
            <person name="Barry K."/>
            <person name="Detter J.C."/>
            <person name="Glavina del Rio T."/>
            <person name="Hammon N."/>
            <person name="Israni S."/>
            <person name="Pitluck S."/>
            <person name="Goltsman E."/>
            <person name="Schmutz J."/>
            <person name="Larimer F."/>
            <person name="Land M."/>
            <person name="Hauser L."/>
            <person name="Mikhailova N."/>
            <person name="Li T."/>
            <person name="Overmann J."/>
            <person name="Bryant D.A."/>
            <person name="Richardson P."/>
        </authorList>
    </citation>
    <scope>NUCLEOTIDE SEQUENCE [LARGE SCALE GENOMIC DNA]</scope>
    <source>
        <strain>DSM 266 / SMG 266 / 2430</strain>
    </source>
</reference>
<organism>
    <name type="scientific">Chlorobium phaeobacteroides (strain DSM 266 / SMG 266 / 2430)</name>
    <dbReference type="NCBI Taxonomy" id="290317"/>
    <lineage>
        <taxon>Bacteria</taxon>
        <taxon>Pseudomonadati</taxon>
        <taxon>Chlorobiota</taxon>
        <taxon>Chlorobiia</taxon>
        <taxon>Chlorobiales</taxon>
        <taxon>Chlorobiaceae</taxon>
        <taxon>Chlorobium/Pelodictyon group</taxon>
        <taxon>Chlorobium</taxon>
    </lineage>
</organism>
<dbReference type="EC" id="2.8.1.10" evidence="1"/>
<dbReference type="EMBL" id="CP000492">
    <property type="protein sequence ID" value="ABL64784.1"/>
    <property type="molecule type" value="Genomic_DNA"/>
</dbReference>
<dbReference type="RefSeq" id="WP_011744613.1">
    <property type="nucleotide sequence ID" value="NC_008639.1"/>
</dbReference>
<dbReference type="SMR" id="A1BEF7"/>
<dbReference type="STRING" id="290317.Cpha266_0730"/>
<dbReference type="KEGG" id="cph:Cpha266_0730"/>
<dbReference type="eggNOG" id="COG2022">
    <property type="taxonomic scope" value="Bacteria"/>
</dbReference>
<dbReference type="HOGENOM" id="CLU_062233_1_0_10"/>
<dbReference type="OrthoDB" id="9805935at2"/>
<dbReference type="UniPathway" id="UPA00060"/>
<dbReference type="Proteomes" id="UP000008701">
    <property type="component" value="Chromosome"/>
</dbReference>
<dbReference type="GO" id="GO:0005737">
    <property type="term" value="C:cytoplasm"/>
    <property type="evidence" value="ECO:0007669"/>
    <property type="project" value="UniProtKB-SubCell"/>
</dbReference>
<dbReference type="GO" id="GO:1990107">
    <property type="term" value="F:thiazole synthase activity"/>
    <property type="evidence" value="ECO:0007669"/>
    <property type="project" value="UniProtKB-EC"/>
</dbReference>
<dbReference type="GO" id="GO:0009229">
    <property type="term" value="P:thiamine diphosphate biosynthetic process"/>
    <property type="evidence" value="ECO:0007669"/>
    <property type="project" value="UniProtKB-UniRule"/>
</dbReference>
<dbReference type="CDD" id="cd04728">
    <property type="entry name" value="ThiG"/>
    <property type="match status" value="1"/>
</dbReference>
<dbReference type="Gene3D" id="3.20.20.70">
    <property type="entry name" value="Aldolase class I"/>
    <property type="match status" value="1"/>
</dbReference>
<dbReference type="HAMAP" id="MF_00443">
    <property type="entry name" value="ThiG"/>
    <property type="match status" value="1"/>
</dbReference>
<dbReference type="InterPro" id="IPR013785">
    <property type="entry name" value="Aldolase_TIM"/>
</dbReference>
<dbReference type="InterPro" id="IPR033983">
    <property type="entry name" value="Thiazole_synthase_ThiG"/>
</dbReference>
<dbReference type="InterPro" id="IPR008867">
    <property type="entry name" value="ThiG"/>
</dbReference>
<dbReference type="PANTHER" id="PTHR34266">
    <property type="entry name" value="THIAZOLE SYNTHASE"/>
    <property type="match status" value="1"/>
</dbReference>
<dbReference type="PANTHER" id="PTHR34266:SF2">
    <property type="entry name" value="THIAZOLE SYNTHASE"/>
    <property type="match status" value="1"/>
</dbReference>
<dbReference type="Pfam" id="PF05690">
    <property type="entry name" value="ThiG"/>
    <property type="match status" value="1"/>
</dbReference>
<dbReference type="SUPFAM" id="SSF110399">
    <property type="entry name" value="ThiG-like"/>
    <property type="match status" value="1"/>
</dbReference>
<name>THIG_CHLPD</name>
<feature type="chain" id="PRO_1000196842" description="Thiazole synthase">
    <location>
        <begin position="1"/>
        <end position="259"/>
    </location>
</feature>
<feature type="active site" description="Schiff-base intermediate with DXP" evidence="1">
    <location>
        <position position="98"/>
    </location>
</feature>
<feature type="binding site" evidence="1">
    <location>
        <position position="159"/>
    </location>
    <ligand>
        <name>1-deoxy-D-xylulose 5-phosphate</name>
        <dbReference type="ChEBI" id="CHEBI:57792"/>
    </ligand>
</feature>
<feature type="binding site" evidence="1">
    <location>
        <begin position="185"/>
        <end position="186"/>
    </location>
    <ligand>
        <name>1-deoxy-D-xylulose 5-phosphate</name>
        <dbReference type="ChEBI" id="CHEBI:57792"/>
    </ligand>
</feature>
<feature type="binding site" evidence="1">
    <location>
        <begin position="207"/>
        <end position="208"/>
    </location>
    <ligand>
        <name>1-deoxy-D-xylulose 5-phosphate</name>
        <dbReference type="ChEBI" id="CHEBI:57792"/>
    </ligand>
</feature>
<proteinExistence type="inferred from homology"/>
<gene>
    <name evidence="1" type="primary">thiG</name>
    <name type="ordered locus">Cpha266_0730</name>
</gene>
<comment type="function">
    <text evidence="1">Catalyzes the rearrangement of 1-deoxy-D-xylulose 5-phosphate (DXP) to produce the thiazole phosphate moiety of thiamine. Sulfur is provided by the thiocarboxylate moiety of the carrier protein ThiS. In vitro, sulfur can be provided by H(2)S.</text>
</comment>
<comment type="catalytic activity">
    <reaction evidence="1">
        <text>[ThiS sulfur-carrier protein]-C-terminal-Gly-aminoethanethioate + 2-iminoacetate + 1-deoxy-D-xylulose 5-phosphate = [ThiS sulfur-carrier protein]-C-terminal Gly-Gly + 2-[(2R,5Z)-2-carboxy-4-methylthiazol-5(2H)-ylidene]ethyl phosphate + 2 H2O + H(+)</text>
        <dbReference type="Rhea" id="RHEA:26297"/>
        <dbReference type="Rhea" id="RHEA-COMP:12909"/>
        <dbReference type="Rhea" id="RHEA-COMP:19908"/>
        <dbReference type="ChEBI" id="CHEBI:15377"/>
        <dbReference type="ChEBI" id="CHEBI:15378"/>
        <dbReference type="ChEBI" id="CHEBI:57792"/>
        <dbReference type="ChEBI" id="CHEBI:62899"/>
        <dbReference type="ChEBI" id="CHEBI:77846"/>
        <dbReference type="ChEBI" id="CHEBI:90778"/>
        <dbReference type="ChEBI" id="CHEBI:232372"/>
        <dbReference type="EC" id="2.8.1.10"/>
    </reaction>
</comment>
<comment type="pathway">
    <text evidence="1">Cofactor biosynthesis; thiamine diphosphate biosynthesis.</text>
</comment>
<comment type="subunit">
    <text evidence="1">Homotetramer. Forms heterodimers with either ThiH or ThiS.</text>
</comment>
<comment type="subcellular location">
    <subcellularLocation>
        <location evidence="1">Cytoplasm</location>
    </subcellularLocation>
</comment>
<comment type="similarity">
    <text evidence="1">Belongs to the ThiG family.</text>
</comment>
<protein>
    <recommendedName>
        <fullName evidence="1">Thiazole synthase</fullName>
        <ecNumber evidence="1">2.8.1.10</ecNumber>
    </recommendedName>
</protein>
<accession>A1BEF7</accession>
<evidence type="ECO:0000255" key="1">
    <source>
        <dbReference type="HAMAP-Rule" id="MF_00443"/>
    </source>
</evidence>
<sequence length="259" mass="27151">MDFLHLGSFVFSSRLILGTGKFSNADLMIEAIKASGAQLVTVALRRFNREQIADDLFGPLSALQGITLMPNTSGASTAREAIHAAHIARELSGSPFIKVEIHPNPQHLMPDALETWEASRILAKEGFLVMPYIPADPVLAKRLEEVGCASVMPLGSAIGSGQGLANAGMIELIIRESGIPVIVDAGLRAPSEAAAAMEMGCGAVLVNSAVAVAGNPPEMANAFAEAVRAGRRAFKAELMPKSSFALSTSPLTTFLGKKS</sequence>
<keyword id="KW-0963">Cytoplasm</keyword>
<keyword id="KW-1185">Reference proteome</keyword>
<keyword id="KW-0704">Schiff base</keyword>
<keyword id="KW-0784">Thiamine biosynthesis</keyword>
<keyword id="KW-0808">Transferase</keyword>